<protein>
    <recommendedName>
        <fullName>Putative 2,3-dihydroxypropane-1-sulfonate exporter</fullName>
    </recommendedName>
</protein>
<comment type="function">
    <text evidence="1">Could be involved in the export of 2,3-dihydroxypropane-1-sulfonate (DHPS).</text>
</comment>
<comment type="subcellular location">
    <subcellularLocation>
        <location evidence="1">Cell inner membrane</location>
        <topology evidence="1">Multi-pass membrane protein</topology>
    </subcellularLocation>
</comment>
<comment type="similarity">
    <text evidence="3">Belongs to the sodium:galactoside symporter (TC 2.A.2) family.</text>
</comment>
<evidence type="ECO:0000250" key="1"/>
<evidence type="ECO:0000255" key="2"/>
<evidence type="ECO:0000305" key="3"/>
<keyword id="KW-0997">Cell inner membrane</keyword>
<keyword id="KW-1003">Cell membrane</keyword>
<keyword id="KW-0472">Membrane</keyword>
<keyword id="KW-1185">Reference proteome</keyword>
<keyword id="KW-0769">Symport</keyword>
<keyword id="KW-0812">Transmembrane</keyword>
<keyword id="KW-1133">Transmembrane helix</keyword>
<keyword id="KW-0813">Transport</keyword>
<sequence>MSQTSSNPATLRLPFKEKLAYGLGDLGSNILLDIGTLYLLKFYTDVLGLPGTYGGIIFLIAKFFTAFTDMGTGIMLDSRRKIGPKGKFRPFVLYAAFPVTLLAIANFVGTPFEVTGKTVVATMLFMLYGLVFSMMNCSYGAMVPAITKNPDERASLAAWRQGGATLGLLLCTVGFVPVMNLIEGNAQLSYIFAATLFSLFGLLFMWLCYAGVKERYVEVKPVDSAQKPGLLQSFRAIAGNRPLFILCIANLCTLGAFNVKLAIQVYYTQYVLNDPILLSWMGFFSMGCIFIGVFLMPGAVRRFGKKKVYIGGLLIWVAGDLLNYFFGGGSVSFVAFSCLAFFGSAFVNSLNWALVSDTVEYGEWRTGVRSEGTVYTGFTFFRKVSQALAGFFPGWMLTQIGYIPNVVQSAGTVEGLRQLIFIYPCVLAVITIIAMGCFYNLNEKMYVRIVEEIEARKHTV</sequence>
<gene>
    <name type="primary">yihP</name>
    <name type="ordered locus">STM4018</name>
</gene>
<reference key="1">
    <citation type="submission" date="2000-01" db="EMBL/GenBank/DDBJ databases">
        <title>Utilization of dihydroorotate as sole pyrimidine source by Salmonella typhimurium.</title>
        <authorList>
            <person name="Krogan N.J."/>
            <person name="Zhang R."/>
            <person name="Neuhard J."/>
            <person name="Kelln R.A."/>
        </authorList>
    </citation>
    <scope>NUCLEOTIDE SEQUENCE [GENOMIC DNA]</scope>
    <source>
        <strain>LT2</strain>
    </source>
</reference>
<reference key="2">
    <citation type="journal article" date="2001" name="Nature">
        <title>Complete genome sequence of Salmonella enterica serovar Typhimurium LT2.</title>
        <authorList>
            <person name="McClelland M."/>
            <person name="Sanderson K.E."/>
            <person name="Spieth J."/>
            <person name="Clifton S.W."/>
            <person name="Latreille P."/>
            <person name="Courtney L."/>
            <person name="Porwollik S."/>
            <person name="Ali J."/>
            <person name="Dante M."/>
            <person name="Du F."/>
            <person name="Hou S."/>
            <person name="Layman D."/>
            <person name="Leonard S."/>
            <person name="Nguyen C."/>
            <person name="Scott K."/>
            <person name="Holmes A."/>
            <person name="Grewal N."/>
            <person name="Mulvaney E."/>
            <person name="Ryan E."/>
            <person name="Sun H."/>
            <person name="Florea L."/>
            <person name="Miller W."/>
            <person name="Stoneking T."/>
            <person name="Nhan M."/>
            <person name="Waterston R."/>
            <person name="Wilson R.K."/>
        </authorList>
    </citation>
    <scope>NUCLEOTIDE SEQUENCE [LARGE SCALE GENOMIC DNA]</scope>
    <source>
        <strain>LT2 / SGSC1412 / ATCC 700720</strain>
    </source>
</reference>
<organism>
    <name type="scientific">Salmonella typhimurium (strain LT2 / SGSC1412 / ATCC 700720)</name>
    <dbReference type="NCBI Taxonomy" id="99287"/>
    <lineage>
        <taxon>Bacteria</taxon>
        <taxon>Pseudomonadati</taxon>
        <taxon>Pseudomonadota</taxon>
        <taxon>Gammaproteobacteria</taxon>
        <taxon>Enterobacterales</taxon>
        <taxon>Enterobacteriaceae</taxon>
        <taxon>Salmonella</taxon>
    </lineage>
</organism>
<accession>Q9L7R5</accession>
<name>YIHP_SALTY</name>
<feature type="chain" id="PRO_0000170770" description="Putative 2,3-dihydroxypropane-1-sulfonate exporter">
    <location>
        <begin position="1"/>
        <end position="460"/>
    </location>
</feature>
<feature type="topological domain" description="Cytoplasmic" evidence="2">
    <location>
        <begin position="1"/>
        <end position="18"/>
    </location>
</feature>
<feature type="transmembrane region" description="Helical" evidence="2">
    <location>
        <begin position="19"/>
        <end position="39"/>
    </location>
</feature>
<feature type="topological domain" description="Periplasmic" evidence="2">
    <location>
        <begin position="40"/>
        <end position="46"/>
    </location>
</feature>
<feature type="transmembrane region" description="Helical" evidence="2">
    <location>
        <begin position="47"/>
        <end position="67"/>
    </location>
</feature>
<feature type="topological domain" description="Cytoplasmic" evidence="2">
    <location>
        <begin position="68"/>
        <end position="91"/>
    </location>
</feature>
<feature type="transmembrane region" description="Helical" evidence="2">
    <location>
        <begin position="92"/>
        <end position="112"/>
    </location>
</feature>
<feature type="topological domain" description="Periplasmic" evidence="2">
    <location>
        <begin position="113"/>
        <end position="122"/>
    </location>
</feature>
<feature type="transmembrane region" description="Helical" evidence="2">
    <location>
        <begin position="123"/>
        <end position="143"/>
    </location>
</feature>
<feature type="topological domain" description="Cytoplasmic" evidence="2">
    <location>
        <begin position="144"/>
        <end position="161"/>
    </location>
</feature>
<feature type="transmembrane region" description="Helical" evidence="2">
    <location>
        <begin position="162"/>
        <end position="182"/>
    </location>
</feature>
<feature type="topological domain" description="Periplasmic" evidence="2">
    <location>
        <begin position="183"/>
        <end position="190"/>
    </location>
</feature>
<feature type="transmembrane region" description="Helical" evidence="2">
    <location>
        <begin position="191"/>
        <end position="211"/>
    </location>
</feature>
<feature type="topological domain" description="Cytoplasmic" evidence="2">
    <location>
        <begin position="212"/>
        <end position="242"/>
    </location>
</feature>
<feature type="transmembrane region" description="Helical" evidence="2">
    <location>
        <begin position="243"/>
        <end position="263"/>
    </location>
</feature>
<feature type="topological domain" description="Periplasmic" evidence="2">
    <location>
        <begin position="264"/>
        <end position="275"/>
    </location>
</feature>
<feature type="transmembrane region" description="Helical" evidence="2">
    <location>
        <begin position="276"/>
        <end position="296"/>
    </location>
</feature>
<feature type="topological domain" description="Cytoplasmic" evidence="2">
    <location>
        <begin position="297"/>
        <end position="307"/>
    </location>
</feature>
<feature type="transmembrane region" description="Helical" evidence="2">
    <location>
        <begin position="308"/>
        <end position="328"/>
    </location>
</feature>
<feature type="topological domain" description="Periplasmic" evidence="2">
    <location>
        <position position="329"/>
    </location>
</feature>
<feature type="transmembrane region" description="Helical" evidence="2">
    <location>
        <begin position="330"/>
        <end position="350"/>
    </location>
</feature>
<feature type="topological domain" description="Cytoplasmic" evidence="2">
    <location>
        <begin position="351"/>
        <end position="386"/>
    </location>
</feature>
<feature type="transmembrane region" description="Helical" evidence="2">
    <location>
        <begin position="387"/>
        <end position="407"/>
    </location>
</feature>
<feature type="topological domain" description="Periplasmic" evidence="2">
    <location>
        <begin position="408"/>
        <end position="418"/>
    </location>
</feature>
<feature type="transmembrane region" description="Helical" evidence="2">
    <location>
        <begin position="419"/>
        <end position="439"/>
    </location>
</feature>
<feature type="topological domain" description="Cytoplasmic" evidence="2">
    <location>
        <begin position="440"/>
        <end position="460"/>
    </location>
</feature>
<proteinExistence type="inferred from homology"/>
<dbReference type="EMBL" id="AF220438">
    <property type="protein sequence ID" value="AAF27926.1"/>
    <property type="molecule type" value="Genomic_DNA"/>
</dbReference>
<dbReference type="EMBL" id="AE006468">
    <property type="protein sequence ID" value="AAL22857.1"/>
    <property type="molecule type" value="Genomic_DNA"/>
</dbReference>
<dbReference type="RefSeq" id="NP_462898.1">
    <property type="nucleotide sequence ID" value="NC_003197.2"/>
</dbReference>
<dbReference type="RefSeq" id="WP_000084251.1">
    <property type="nucleotide sequence ID" value="NC_003197.2"/>
</dbReference>
<dbReference type="SMR" id="Q9L7R5"/>
<dbReference type="STRING" id="99287.STM4018"/>
<dbReference type="PaxDb" id="99287-STM4018"/>
<dbReference type="GeneID" id="1255544"/>
<dbReference type="KEGG" id="stm:STM4018"/>
<dbReference type="PATRIC" id="fig|99287.12.peg.4233"/>
<dbReference type="HOGENOM" id="CLU_027408_0_1_6"/>
<dbReference type="OMA" id="AYGMGDL"/>
<dbReference type="PhylomeDB" id="Q9L7R5"/>
<dbReference type="BioCyc" id="SENT99287:STM4018-MONOMER"/>
<dbReference type="Proteomes" id="UP000001014">
    <property type="component" value="Chromosome"/>
</dbReference>
<dbReference type="GO" id="GO:0005886">
    <property type="term" value="C:plasma membrane"/>
    <property type="evidence" value="ECO:0000318"/>
    <property type="project" value="GO_Central"/>
</dbReference>
<dbReference type="GO" id="GO:0015293">
    <property type="term" value="F:symporter activity"/>
    <property type="evidence" value="ECO:0007669"/>
    <property type="project" value="UniProtKB-KW"/>
</dbReference>
<dbReference type="GO" id="GO:0008643">
    <property type="term" value="P:carbohydrate transport"/>
    <property type="evidence" value="ECO:0007669"/>
    <property type="project" value="InterPro"/>
</dbReference>
<dbReference type="GO" id="GO:0006814">
    <property type="term" value="P:sodium ion transport"/>
    <property type="evidence" value="ECO:0007669"/>
    <property type="project" value="InterPro"/>
</dbReference>
<dbReference type="GO" id="GO:0055085">
    <property type="term" value="P:transmembrane transport"/>
    <property type="evidence" value="ECO:0000318"/>
    <property type="project" value="GO_Central"/>
</dbReference>
<dbReference type="CDD" id="cd17332">
    <property type="entry name" value="MFS_MelB_like"/>
    <property type="match status" value="1"/>
</dbReference>
<dbReference type="FunFam" id="1.20.1250.20:FF:000063">
    <property type="entry name" value="MFS transporter"/>
    <property type="match status" value="1"/>
</dbReference>
<dbReference type="Gene3D" id="1.20.1250.20">
    <property type="entry name" value="MFS general substrate transporter like domains"/>
    <property type="match status" value="1"/>
</dbReference>
<dbReference type="InterPro" id="IPR039672">
    <property type="entry name" value="MFS_2"/>
</dbReference>
<dbReference type="InterPro" id="IPR036259">
    <property type="entry name" value="MFS_trans_sf"/>
</dbReference>
<dbReference type="InterPro" id="IPR001927">
    <property type="entry name" value="Na/Gal_symport"/>
</dbReference>
<dbReference type="InterPro" id="IPR018043">
    <property type="entry name" value="Na/Gal_symport_CS"/>
</dbReference>
<dbReference type="NCBIfam" id="TIGR00792">
    <property type="entry name" value="gph"/>
    <property type="match status" value="1"/>
</dbReference>
<dbReference type="PANTHER" id="PTHR11328:SF39">
    <property type="entry name" value="2,3-DIHYDROXYPROPANE-1-SULFONATE EXPORTER-RELATED"/>
    <property type="match status" value="1"/>
</dbReference>
<dbReference type="PANTHER" id="PTHR11328">
    <property type="entry name" value="MAJOR FACILITATOR SUPERFAMILY DOMAIN-CONTAINING PROTEIN"/>
    <property type="match status" value="1"/>
</dbReference>
<dbReference type="Pfam" id="PF13347">
    <property type="entry name" value="MFS_2"/>
    <property type="match status" value="1"/>
</dbReference>
<dbReference type="SUPFAM" id="SSF103473">
    <property type="entry name" value="MFS general substrate transporter"/>
    <property type="match status" value="1"/>
</dbReference>
<dbReference type="PROSITE" id="PS00872">
    <property type="entry name" value="NA_GALACTOSIDE_SYMP"/>
    <property type="match status" value="1"/>
</dbReference>